<name>SYA_ALBFT</name>
<dbReference type="EC" id="6.1.1.7" evidence="1"/>
<dbReference type="EMBL" id="CP000267">
    <property type="protein sequence ID" value="ABD68341.1"/>
    <property type="molecule type" value="Genomic_DNA"/>
</dbReference>
<dbReference type="RefSeq" id="WP_011462914.1">
    <property type="nucleotide sequence ID" value="NC_007908.1"/>
</dbReference>
<dbReference type="SMR" id="Q221G2"/>
<dbReference type="STRING" id="338969.Rfer_0590"/>
<dbReference type="KEGG" id="rfr:Rfer_0590"/>
<dbReference type="eggNOG" id="COG0013">
    <property type="taxonomic scope" value="Bacteria"/>
</dbReference>
<dbReference type="HOGENOM" id="CLU_004485_1_1_4"/>
<dbReference type="OrthoDB" id="9803884at2"/>
<dbReference type="Proteomes" id="UP000008332">
    <property type="component" value="Chromosome"/>
</dbReference>
<dbReference type="GO" id="GO:0005829">
    <property type="term" value="C:cytosol"/>
    <property type="evidence" value="ECO:0007669"/>
    <property type="project" value="TreeGrafter"/>
</dbReference>
<dbReference type="GO" id="GO:0004813">
    <property type="term" value="F:alanine-tRNA ligase activity"/>
    <property type="evidence" value="ECO:0007669"/>
    <property type="project" value="UniProtKB-UniRule"/>
</dbReference>
<dbReference type="GO" id="GO:0002161">
    <property type="term" value="F:aminoacyl-tRNA deacylase activity"/>
    <property type="evidence" value="ECO:0007669"/>
    <property type="project" value="TreeGrafter"/>
</dbReference>
<dbReference type="GO" id="GO:0005524">
    <property type="term" value="F:ATP binding"/>
    <property type="evidence" value="ECO:0007669"/>
    <property type="project" value="UniProtKB-UniRule"/>
</dbReference>
<dbReference type="GO" id="GO:0000049">
    <property type="term" value="F:tRNA binding"/>
    <property type="evidence" value="ECO:0007669"/>
    <property type="project" value="UniProtKB-KW"/>
</dbReference>
<dbReference type="GO" id="GO:0008270">
    <property type="term" value="F:zinc ion binding"/>
    <property type="evidence" value="ECO:0007669"/>
    <property type="project" value="UniProtKB-UniRule"/>
</dbReference>
<dbReference type="GO" id="GO:0006419">
    <property type="term" value="P:alanyl-tRNA aminoacylation"/>
    <property type="evidence" value="ECO:0007669"/>
    <property type="project" value="UniProtKB-UniRule"/>
</dbReference>
<dbReference type="GO" id="GO:0045892">
    <property type="term" value="P:negative regulation of DNA-templated transcription"/>
    <property type="evidence" value="ECO:0007669"/>
    <property type="project" value="TreeGrafter"/>
</dbReference>
<dbReference type="CDD" id="cd00673">
    <property type="entry name" value="AlaRS_core"/>
    <property type="match status" value="1"/>
</dbReference>
<dbReference type="FunFam" id="2.40.30.130:FF:000001">
    <property type="entry name" value="Alanine--tRNA ligase"/>
    <property type="match status" value="1"/>
</dbReference>
<dbReference type="FunFam" id="3.10.310.40:FF:000001">
    <property type="entry name" value="Alanine--tRNA ligase"/>
    <property type="match status" value="1"/>
</dbReference>
<dbReference type="FunFam" id="3.30.54.20:FF:000001">
    <property type="entry name" value="Alanine--tRNA ligase"/>
    <property type="match status" value="1"/>
</dbReference>
<dbReference type="FunFam" id="3.30.930.10:FF:000004">
    <property type="entry name" value="Alanine--tRNA ligase"/>
    <property type="match status" value="1"/>
</dbReference>
<dbReference type="FunFam" id="3.30.980.10:FF:000004">
    <property type="entry name" value="Alanine--tRNA ligase, cytoplasmic"/>
    <property type="match status" value="1"/>
</dbReference>
<dbReference type="Gene3D" id="2.40.30.130">
    <property type="match status" value="1"/>
</dbReference>
<dbReference type="Gene3D" id="3.10.310.40">
    <property type="match status" value="1"/>
</dbReference>
<dbReference type="Gene3D" id="3.30.54.20">
    <property type="match status" value="1"/>
</dbReference>
<dbReference type="Gene3D" id="6.10.250.550">
    <property type="match status" value="1"/>
</dbReference>
<dbReference type="Gene3D" id="3.30.930.10">
    <property type="entry name" value="Bira Bifunctional Protein, Domain 2"/>
    <property type="match status" value="1"/>
</dbReference>
<dbReference type="Gene3D" id="3.30.980.10">
    <property type="entry name" value="Threonyl-trna Synthetase, Chain A, domain 2"/>
    <property type="match status" value="1"/>
</dbReference>
<dbReference type="HAMAP" id="MF_00036_B">
    <property type="entry name" value="Ala_tRNA_synth_B"/>
    <property type="match status" value="1"/>
</dbReference>
<dbReference type="InterPro" id="IPR045864">
    <property type="entry name" value="aa-tRNA-synth_II/BPL/LPL"/>
</dbReference>
<dbReference type="InterPro" id="IPR002318">
    <property type="entry name" value="Ala-tRNA-lgiase_IIc"/>
</dbReference>
<dbReference type="InterPro" id="IPR018162">
    <property type="entry name" value="Ala-tRNA-ligase_IIc_anticod-bd"/>
</dbReference>
<dbReference type="InterPro" id="IPR018165">
    <property type="entry name" value="Ala-tRNA-synth_IIc_core"/>
</dbReference>
<dbReference type="InterPro" id="IPR018164">
    <property type="entry name" value="Ala-tRNA-synth_IIc_N"/>
</dbReference>
<dbReference type="InterPro" id="IPR050058">
    <property type="entry name" value="Ala-tRNA_ligase"/>
</dbReference>
<dbReference type="InterPro" id="IPR023033">
    <property type="entry name" value="Ala_tRNA_ligase_euk/bac"/>
</dbReference>
<dbReference type="InterPro" id="IPR003156">
    <property type="entry name" value="DHHA1_dom"/>
</dbReference>
<dbReference type="InterPro" id="IPR018163">
    <property type="entry name" value="Thr/Ala-tRNA-synth_IIc_edit"/>
</dbReference>
<dbReference type="InterPro" id="IPR009000">
    <property type="entry name" value="Transl_B-barrel_sf"/>
</dbReference>
<dbReference type="InterPro" id="IPR012947">
    <property type="entry name" value="tRNA_SAD"/>
</dbReference>
<dbReference type="NCBIfam" id="TIGR00344">
    <property type="entry name" value="alaS"/>
    <property type="match status" value="1"/>
</dbReference>
<dbReference type="PANTHER" id="PTHR11777:SF9">
    <property type="entry name" value="ALANINE--TRNA LIGASE, CYTOPLASMIC"/>
    <property type="match status" value="1"/>
</dbReference>
<dbReference type="PANTHER" id="PTHR11777">
    <property type="entry name" value="ALANYL-TRNA SYNTHETASE"/>
    <property type="match status" value="1"/>
</dbReference>
<dbReference type="Pfam" id="PF02272">
    <property type="entry name" value="DHHA1"/>
    <property type="match status" value="1"/>
</dbReference>
<dbReference type="Pfam" id="PF01411">
    <property type="entry name" value="tRNA-synt_2c"/>
    <property type="match status" value="1"/>
</dbReference>
<dbReference type="Pfam" id="PF07973">
    <property type="entry name" value="tRNA_SAD"/>
    <property type="match status" value="1"/>
</dbReference>
<dbReference type="PRINTS" id="PR00980">
    <property type="entry name" value="TRNASYNTHALA"/>
</dbReference>
<dbReference type="SMART" id="SM00863">
    <property type="entry name" value="tRNA_SAD"/>
    <property type="match status" value="1"/>
</dbReference>
<dbReference type="SUPFAM" id="SSF55681">
    <property type="entry name" value="Class II aaRS and biotin synthetases"/>
    <property type="match status" value="1"/>
</dbReference>
<dbReference type="SUPFAM" id="SSF101353">
    <property type="entry name" value="Putative anticodon-binding domain of alanyl-tRNA synthetase (AlaRS)"/>
    <property type="match status" value="1"/>
</dbReference>
<dbReference type="SUPFAM" id="SSF55186">
    <property type="entry name" value="ThrRS/AlaRS common domain"/>
    <property type="match status" value="1"/>
</dbReference>
<dbReference type="SUPFAM" id="SSF50447">
    <property type="entry name" value="Translation proteins"/>
    <property type="match status" value="1"/>
</dbReference>
<dbReference type="PROSITE" id="PS50860">
    <property type="entry name" value="AA_TRNA_LIGASE_II_ALA"/>
    <property type="match status" value="1"/>
</dbReference>
<organism>
    <name type="scientific">Albidiferax ferrireducens (strain ATCC BAA-621 / DSM 15236 / T118)</name>
    <name type="common">Rhodoferax ferrireducens</name>
    <dbReference type="NCBI Taxonomy" id="338969"/>
    <lineage>
        <taxon>Bacteria</taxon>
        <taxon>Pseudomonadati</taxon>
        <taxon>Pseudomonadota</taxon>
        <taxon>Betaproteobacteria</taxon>
        <taxon>Burkholderiales</taxon>
        <taxon>Comamonadaceae</taxon>
        <taxon>Rhodoferax</taxon>
    </lineage>
</organism>
<reference key="1">
    <citation type="submission" date="2006-02" db="EMBL/GenBank/DDBJ databases">
        <title>Complete sequence of chromosome of Rhodoferax ferrireducens DSM 15236.</title>
        <authorList>
            <person name="Copeland A."/>
            <person name="Lucas S."/>
            <person name="Lapidus A."/>
            <person name="Barry K."/>
            <person name="Detter J.C."/>
            <person name="Glavina del Rio T."/>
            <person name="Hammon N."/>
            <person name="Israni S."/>
            <person name="Pitluck S."/>
            <person name="Brettin T."/>
            <person name="Bruce D."/>
            <person name="Han C."/>
            <person name="Tapia R."/>
            <person name="Gilna P."/>
            <person name="Kiss H."/>
            <person name="Schmutz J."/>
            <person name="Larimer F."/>
            <person name="Land M."/>
            <person name="Kyrpides N."/>
            <person name="Ivanova N."/>
            <person name="Richardson P."/>
        </authorList>
    </citation>
    <scope>NUCLEOTIDE SEQUENCE [LARGE SCALE GENOMIC DNA]</scope>
    <source>
        <strain>ATCC BAA-621 / DSM 15236 / T118</strain>
    </source>
</reference>
<protein>
    <recommendedName>
        <fullName evidence="1">Alanine--tRNA ligase</fullName>
        <ecNumber evidence="1">6.1.1.7</ecNumber>
    </recommendedName>
    <alternativeName>
        <fullName evidence="1">Alanyl-tRNA synthetase</fullName>
        <shortName evidence="1">AlaRS</shortName>
    </alternativeName>
</protein>
<sequence length="876" mass="94390">MNSTVAPASVADIRKIFLDFFASKGHTVVPSSPLVPGNDPTLMFTNSGMVQFKDVFLGTDKRSYVRAASVQACLRAGGKHNDLENVGYTARHHTFFEMLGNWSFGDYFKRDSLKWGWELLTKVYKLPADKLWATVYIDDDEAYNIWTQEIGLPPERVVRIGDNKGAKYASDNFWMMADTGPCGPCSEIFYDHGPAIAGGPPGSPEQDGDRYIEIWNHVFMQYDMQPDGSVKPLPAPCVDTGMGLERLAAILQHVHSNYEIDIFDALIKAAARETGCTDLGNKSLRVIADHIRATAFLVSDGVLPSNEGRGYVQRRIIRRAIRHGYKLGQKAPFFYKLVPDLVTLMGEAYPGLATQAERIAQVLQAEEERFFETLANGMQILDETLTGDAKVLPGDVAFKLHDTFGFPLDLSADVCRERGVEVDEAGFHAAMEKQKAQGRAAGKFRMDRALEYSGDGNDFVGYERLTEVTKIVALYADSTPVSELKAGQAGVVVLAATPFYGESGGQVGDQGAIFSDGAMFDVADTQKIKADVFGHHGVLKSGALKIGDVVTAHVNASLRAATQRNHSATHLMHKALREVLGAHVQQKGSLVNAERTRFDFAHNAPVTDEQIREVEARVNSEILSNAATQSRVMDIDAAQETGAMMLFGEKYGESVRVLDIGASRELCGGTHVARTGDIGLFKVVAESGVASGVRRIEAVTGQNALSYLQDLEDTVTQVAGTLKAPVVEINERVAGVLDHLKSLEKEIAALKGKLASAQGDELVTQAVDVKGIKVLVAMLEGADTKTLRDTMDKLKDKLKSAVIVLAAVEGDKVQIAAGVTSNSVGKVKAGELVNFVASQVGGKGGGKPDMAMAGGTEPAKLPAALASVMAWVSAKL</sequence>
<evidence type="ECO:0000255" key="1">
    <source>
        <dbReference type="HAMAP-Rule" id="MF_00036"/>
    </source>
</evidence>
<proteinExistence type="inferred from homology"/>
<accession>Q221G2</accession>
<keyword id="KW-0030">Aminoacyl-tRNA synthetase</keyword>
<keyword id="KW-0067">ATP-binding</keyword>
<keyword id="KW-0963">Cytoplasm</keyword>
<keyword id="KW-0436">Ligase</keyword>
<keyword id="KW-0479">Metal-binding</keyword>
<keyword id="KW-0547">Nucleotide-binding</keyword>
<keyword id="KW-0648">Protein biosynthesis</keyword>
<keyword id="KW-1185">Reference proteome</keyword>
<keyword id="KW-0694">RNA-binding</keyword>
<keyword id="KW-0820">tRNA-binding</keyword>
<keyword id="KW-0862">Zinc</keyword>
<feature type="chain" id="PRO_0000347756" description="Alanine--tRNA ligase">
    <location>
        <begin position="1"/>
        <end position="876"/>
    </location>
</feature>
<feature type="binding site" evidence="1">
    <location>
        <position position="566"/>
    </location>
    <ligand>
        <name>Zn(2+)</name>
        <dbReference type="ChEBI" id="CHEBI:29105"/>
    </ligand>
</feature>
<feature type="binding site" evidence="1">
    <location>
        <position position="570"/>
    </location>
    <ligand>
        <name>Zn(2+)</name>
        <dbReference type="ChEBI" id="CHEBI:29105"/>
    </ligand>
</feature>
<feature type="binding site" evidence="1">
    <location>
        <position position="667"/>
    </location>
    <ligand>
        <name>Zn(2+)</name>
        <dbReference type="ChEBI" id="CHEBI:29105"/>
    </ligand>
</feature>
<feature type="binding site" evidence="1">
    <location>
        <position position="671"/>
    </location>
    <ligand>
        <name>Zn(2+)</name>
        <dbReference type="ChEBI" id="CHEBI:29105"/>
    </ligand>
</feature>
<gene>
    <name evidence="1" type="primary">alaS</name>
    <name type="ordered locus">Rfer_0590</name>
</gene>
<comment type="function">
    <text evidence="1">Catalyzes the attachment of alanine to tRNA(Ala) in a two-step reaction: alanine is first activated by ATP to form Ala-AMP and then transferred to the acceptor end of tRNA(Ala). Also edits incorrectly charged Ser-tRNA(Ala) and Gly-tRNA(Ala) via its editing domain.</text>
</comment>
<comment type="catalytic activity">
    <reaction evidence="1">
        <text>tRNA(Ala) + L-alanine + ATP = L-alanyl-tRNA(Ala) + AMP + diphosphate</text>
        <dbReference type="Rhea" id="RHEA:12540"/>
        <dbReference type="Rhea" id="RHEA-COMP:9657"/>
        <dbReference type="Rhea" id="RHEA-COMP:9923"/>
        <dbReference type="ChEBI" id="CHEBI:30616"/>
        <dbReference type="ChEBI" id="CHEBI:33019"/>
        <dbReference type="ChEBI" id="CHEBI:57972"/>
        <dbReference type="ChEBI" id="CHEBI:78442"/>
        <dbReference type="ChEBI" id="CHEBI:78497"/>
        <dbReference type="ChEBI" id="CHEBI:456215"/>
        <dbReference type="EC" id="6.1.1.7"/>
    </reaction>
</comment>
<comment type="cofactor">
    <cofactor evidence="1">
        <name>Zn(2+)</name>
        <dbReference type="ChEBI" id="CHEBI:29105"/>
    </cofactor>
    <text evidence="1">Binds 1 zinc ion per subunit.</text>
</comment>
<comment type="subcellular location">
    <subcellularLocation>
        <location evidence="1">Cytoplasm</location>
    </subcellularLocation>
</comment>
<comment type="domain">
    <text evidence="1">Consists of three domains; the N-terminal catalytic domain, the editing domain and the C-terminal C-Ala domain. The editing domain removes incorrectly charged amino acids, while the C-Ala domain, along with tRNA(Ala), serves as a bridge to cooperatively bring together the editing and aminoacylation centers thus stimulating deacylation of misacylated tRNAs.</text>
</comment>
<comment type="similarity">
    <text evidence="1">Belongs to the class-II aminoacyl-tRNA synthetase family.</text>
</comment>